<protein>
    <recommendedName>
        <fullName evidence="1">Adenylosuccinate synthetase</fullName>
        <shortName evidence="1">AMPSase</shortName>
        <shortName evidence="1">AdSS</shortName>
        <ecNumber evidence="1">6.3.4.4</ecNumber>
    </recommendedName>
    <alternativeName>
        <fullName evidence="1">IMP--aspartate ligase</fullName>
    </alternativeName>
</protein>
<sequence length="174" mass="19010">MGKNVVVLGTQWGDEGKGKIVDLLTDQAAAVVRYQGGHNAGHTLVIDGEKTVLHLIPSGILRENVQCLIGNGVVVAPDALLREITKLEEKGVPVRERLRISPSCTLILPYHVALDQAREASRSEGKIGTTGRGIGPAYEDKVARRGLRIGDLFNPERFAVKLRELLEYHNFALQ</sequence>
<feature type="chain" id="PRO_0000095216" description="Adenylosuccinate synthetase">
    <location>
        <begin position="1"/>
        <end position="174" status="greater than"/>
    </location>
</feature>
<feature type="active site" description="Proton acceptor" evidence="1">
    <location>
        <position position="14"/>
    </location>
</feature>
<feature type="active site" description="Proton donor" evidence="1">
    <location>
        <position position="42"/>
    </location>
</feature>
<feature type="binding site" evidence="1">
    <location>
        <begin position="13"/>
        <end position="19"/>
    </location>
    <ligand>
        <name>GTP</name>
        <dbReference type="ChEBI" id="CHEBI:37565"/>
    </ligand>
</feature>
<feature type="binding site" description="in other chain" evidence="1">
    <location>
        <begin position="14"/>
        <end position="17"/>
    </location>
    <ligand>
        <name>IMP</name>
        <dbReference type="ChEBI" id="CHEBI:58053"/>
        <note>ligand shared between dimeric partners</note>
    </ligand>
</feature>
<feature type="binding site" evidence="1">
    <location>
        <position position="14"/>
    </location>
    <ligand>
        <name>Mg(2+)</name>
        <dbReference type="ChEBI" id="CHEBI:18420"/>
    </ligand>
</feature>
<feature type="binding site" description="in other chain" evidence="1">
    <location>
        <begin position="39"/>
        <end position="42"/>
    </location>
    <ligand>
        <name>IMP</name>
        <dbReference type="ChEBI" id="CHEBI:58053"/>
        <note>ligand shared between dimeric partners</note>
    </ligand>
</feature>
<feature type="binding site" evidence="1">
    <location>
        <begin position="41"/>
        <end position="43"/>
    </location>
    <ligand>
        <name>GTP</name>
        <dbReference type="ChEBI" id="CHEBI:37565"/>
    </ligand>
</feature>
<feature type="binding site" evidence="1">
    <location>
        <position position="41"/>
    </location>
    <ligand>
        <name>Mg(2+)</name>
        <dbReference type="ChEBI" id="CHEBI:18420"/>
    </ligand>
</feature>
<feature type="binding site" description="in other chain" evidence="1">
    <location>
        <position position="130"/>
    </location>
    <ligand>
        <name>IMP</name>
        <dbReference type="ChEBI" id="CHEBI:58053"/>
        <note>ligand shared between dimeric partners</note>
    </ligand>
</feature>
<feature type="binding site" evidence="1">
    <location>
        <position position="144"/>
    </location>
    <ligand>
        <name>IMP</name>
        <dbReference type="ChEBI" id="CHEBI:58053"/>
        <note>ligand shared between dimeric partners</note>
    </ligand>
</feature>
<feature type="non-terminal residue">
    <location>
        <position position="174"/>
    </location>
</feature>
<reference key="1">
    <citation type="journal article" date="1998" name="Microbiology">
        <title>Natural genetic transformation of Pseudomonas stutzeri in a non-sterile soil.</title>
        <authorList>
            <person name="Sikorski J."/>
            <person name="Graupner S."/>
            <person name="Lorenz M.G."/>
            <person name="Wackernagel W."/>
        </authorList>
    </citation>
    <scope>NUCLEOTIDE SEQUENCE [GENOMIC DNA]</scope>
    <source>
        <strain>DSM 10701 / IAM 15110 / JCM 21571 / JM300</strain>
    </source>
</reference>
<keyword id="KW-0963">Cytoplasm</keyword>
<keyword id="KW-0342">GTP-binding</keyword>
<keyword id="KW-0436">Ligase</keyword>
<keyword id="KW-0460">Magnesium</keyword>
<keyword id="KW-0479">Metal-binding</keyword>
<keyword id="KW-0547">Nucleotide-binding</keyword>
<keyword id="KW-0658">Purine biosynthesis</keyword>
<gene>
    <name evidence="1" type="primary">purA</name>
</gene>
<name>PURA_STUST</name>
<dbReference type="EC" id="6.3.4.4" evidence="1"/>
<dbReference type="EMBL" id="AF010189">
    <property type="protein sequence ID" value="AAC46134.1"/>
    <property type="molecule type" value="Genomic_DNA"/>
</dbReference>
<dbReference type="SMR" id="O30549"/>
<dbReference type="eggNOG" id="COG0104">
    <property type="taxonomic scope" value="Bacteria"/>
</dbReference>
<dbReference type="UniPathway" id="UPA00075">
    <property type="reaction ID" value="UER00335"/>
</dbReference>
<dbReference type="GO" id="GO:0005737">
    <property type="term" value="C:cytoplasm"/>
    <property type="evidence" value="ECO:0007669"/>
    <property type="project" value="UniProtKB-SubCell"/>
</dbReference>
<dbReference type="GO" id="GO:0004019">
    <property type="term" value="F:adenylosuccinate synthase activity"/>
    <property type="evidence" value="ECO:0007669"/>
    <property type="project" value="UniProtKB-EC"/>
</dbReference>
<dbReference type="GO" id="GO:0005525">
    <property type="term" value="F:GTP binding"/>
    <property type="evidence" value="ECO:0007669"/>
    <property type="project" value="UniProtKB-KW"/>
</dbReference>
<dbReference type="GO" id="GO:0046872">
    <property type="term" value="F:metal ion binding"/>
    <property type="evidence" value="ECO:0007669"/>
    <property type="project" value="UniProtKB-KW"/>
</dbReference>
<dbReference type="GO" id="GO:0044208">
    <property type="term" value="P:'de novo' AMP biosynthetic process"/>
    <property type="evidence" value="ECO:0007669"/>
    <property type="project" value="UniProtKB-UniPathway"/>
</dbReference>
<dbReference type="GO" id="GO:0046040">
    <property type="term" value="P:IMP metabolic process"/>
    <property type="evidence" value="ECO:0007669"/>
    <property type="project" value="TreeGrafter"/>
</dbReference>
<dbReference type="FunFam" id="1.10.300.10:FF:000001">
    <property type="entry name" value="Adenylosuccinate synthetase"/>
    <property type="match status" value="1"/>
</dbReference>
<dbReference type="Gene3D" id="3.40.440.10">
    <property type="entry name" value="Adenylosuccinate Synthetase, subunit A, domain 1"/>
    <property type="match status" value="1"/>
</dbReference>
<dbReference type="Gene3D" id="1.10.300.10">
    <property type="entry name" value="Adenylosuccinate Synthetase, subunit A, domain 2"/>
    <property type="match status" value="1"/>
</dbReference>
<dbReference type="HAMAP" id="MF_00011">
    <property type="entry name" value="Adenylosucc_synth"/>
    <property type="match status" value="1"/>
</dbReference>
<dbReference type="InterPro" id="IPR018220">
    <property type="entry name" value="Adenylosuccin_syn_GTP-bd"/>
</dbReference>
<dbReference type="InterPro" id="IPR033128">
    <property type="entry name" value="Adenylosuccin_syn_Lys_AS"/>
</dbReference>
<dbReference type="InterPro" id="IPR042109">
    <property type="entry name" value="Adenylosuccinate_synth_dom1"/>
</dbReference>
<dbReference type="InterPro" id="IPR042110">
    <property type="entry name" value="Adenylosuccinate_synth_dom2"/>
</dbReference>
<dbReference type="InterPro" id="IPR001114">
    <property type="entry name" value="Adenylosuccinate_synthetase"/>
</dbReference>
<dbReference type="InterPro" id="IPR027417">
    <property type="entry name" value="P-loop_NTPase"/>
</dbReference>
<dbReference type="PANTHER" id="PTHR11846">
    <property type="entry name" value="ADENYLOSUCCINATE SYNTHETASE"/>
    <property type="match status" value="1"/>
</dbReference>
<dbReference type="PANTHER" id="PTHR11846:SF0">
    <property type="entry name" value="ADENYLOSUCCINATE SYNTHETASE"/>
    <property type="match status" value="1"/>
</dbReference>
<dbReference type="Pfam" id="PF00709">
    <property type="entry name" value="Adenylsucc_synt"/>
    <property type="match status" value="1"/>
</dbReference>
<dbReference type="SMART" id="SM00788">
    <property type="entry name" value="Adenylsucc_synt"/>
    <property type="match status" value="1"/>
</dbReference>
<dbReference type="SUPFAM" id="SSF52540">
    <property type="entry name" value="P-loop containing nucleoside triphosphate hydrolases"/>
    <property type="match status" value="1"/>
</dbReference>
<dbReference type="PROSITE" id="PS01266">
    <property type="entry name" value="ADENYLOSUCCIN_SYN_1"/>
    <property type="match status" value="1"/>
</dbReference>
<dbReference type="PROSITE" id="PS00513">
    <property type="entry name" value="ADENYLOSUCCIN_SYN_2"/>
    <property type="match status" value="1"/>
</dbReference>
<proteinExistence type="inferred from homology"/>
<evidence type="ECO:0000255" key="1">
    <source>
        <dbReference type="HAMAP-Rule" id="MF_00011"/>
    </source>
</evidence>
<organism>
    <name type="scientific">Stutzerimonas stutzeri</name>
    <name type="common">Pseudomonas stutzeri</name>
    <dbReference type="NCBI Taxonomy" id="316"/>
    <lineage>
        <taxon>Bacteria</taxon>
        <taxon>Pseudomonadati</taxon>
        <taxon>Pseudomonadota</taxon>
        <taxon>Gammaproteobacteria</taxon>
        <taxon>Pseudomonadales</taxon>
        <taxon>Pseudomonadaceae</taxon>
        <taxon>Stutzerimonas</taxon>
    </lineage>
</organism>
<comment type="function">
    <text evidence="1">Plays an important role in the de novo pathway of purine nucleotide biosynthesis. Catalyzes the first committed step in the biosynthesis of AMP from IMP.</text>
</comment>
<comment type="catalytic activity">
    <reaction evidence="1">
        <text>IMP + L-aspartate + GTP = N(6)-(1,2-dicarboxyethyl)-AMP + GDP + phosphate + 2 H(+)</text>
        <dbReference type="Rhea" id="RHEA:15753"/>
        <dbReference type="ChEBI" id="CHEBI:15378"/>
        <dbReference type="ChEBI" id="CHEBI:29991"/>
        <dbReference type="ChEBI" id="CHEBI:37565"/>
        <dbReference type="ChEBI" id="CHEBI:43474"/>
        <dbReference type="ChEBI" id="CHEBI:57567"/>
        <dbReference type="ChEBI" id="CHEBI:58053"/>
        <dbReference type="ChEBI" id="CHEBI:58189"/>
        <dbReference type="EC" id="6.3.4.4"/>
    </reaction>
</comment>
<comment type="cofactor">
    <cofactor evidence="1">
        <name>Mg(2+)</name>
        <dbReference type="ChEBI" id="CHEBI:18420"/>
    </cofactor>
    <text evidence="1">Binds 1 Mg(2+) ion per subunit.</text>
</comment>
<comment type="pathway">
    <text evidence="1">Purine metabolism; AMP biosynthesis via de novo pathway; AMP from IMP: step 1/2.</text>
</comment>
<comment type="subunit">
    <text evidence="1">Homodimer.</text>
</comment>
<comment type="subcellular location">
    <subcellularLocation>
        <location evidence="1">Cytoplasm</location>
    </subcellularLocation>
</comment>
<comment type="similarity">
    <text evidence="1">Belongs to the adenylosuccinate synthetase family.</text>
</comment>
<accession>O30549</accession>